<gene>
    <name type="primary">pnrc2</name>
</gene>
<organism>
    <name type="scientific">Salmo salar</name>
    <name type="common">Atlantic salmon</name>
    <dbReference type="NCBI Taxonomy" id="8030"/>
    <lineage>
        <taxon>Eukaryota</taxon>
        <taxon>Metazoa</taxon>
        <taxon>Chordata</taxon>
        <taxon>Craniata</taxon>
        <taxon>Vertebrata</taxon>
        <taxon>Euteleostomi</taxon>
        <taxon>Actinopterygii</taxon>
        <taxon>Neopterygii</taxon>
        <taxon>Teleostei</taxon>
        <taxon>Protacanthopterygii</taxon>
        <taxon>Salmoniformes</taxon>
        <taxon>Salmonidae</taxon>
        <taxon>Salmoninae</taxon>
        <taxon>Salmo</taxon>
    </lineage>
</organism>
<dbReference type="EMBL" id="BT045511">
    <property type="protein sequence ID" value="ACI33773.1"/>
    <property type="molecule type" value="mRNA"/>
</dbReference>
<dbReference type="RefSeq" id="NP_001133719.1">
    <property type="nucleotide sequence ID" value="NM_001140247.1"/>
</dbReference>
<dbReference type="RefSeq" id="XP_014019115.1">
    <property type="nucleotide sequence ID" value="XM_014163640.2"/>
</dbReference>
<dbReference type="STRING" id="8030.ENSSSAP00000026159"/>
<dbReference type="PaxDb" id="8030-ENSSSAP00000026159"/>
<dbReference type="Ensembl" id="ENSSSAT00020028572">
    <property type="protein sequence ID" value="ENSSSAP00020026365"/>
    <property type="gene ID" value="ENSSSAG00020010152"/>
</dbReference>
<dbReference type="Ensembl" id="ENSSSAT00070060994">
    <property type="protein sequence ID" value="ENSSSAP00070058453"/>
    <property type="gene ID" value="ENSSSAG00070038019"/>
</dbReference>
<dbReference type="Ensembl" id="ENSSSAT00075128831">
    <property type="protein sequence ID" value="ENSSSAP00075096112"/>
    <property type="gene ID" value="ENSSSAG00075061039"/>
</dbReference>
<dbReference type="GeneID" id="100195218"/>
<dbReference type="KEGG" id="sasa:100195218"/>
<dbReference type="CTD" id="55629"/>
<dbReference type="OrthoDB" id="349630at7898"/>
<dbReference type="Proteomes" id="UP000087266">
    <property type="component" value="Chromosome ssa02"/>
</dbReference>
<dbReference type="Bgee" id="ENSSSAG00000027852">
    <property type="expression patterns" value="Expressed in pharyngeal gill and 25 other cell types or tissues"/>
</dbReference>
<dbReference type="GO" id="GO:0005634">
    <property type="term" value="C:nucleus"/>
    <property type="evidence" value="ECO:0000250"/>
    <property type="project" value="UniProtKB"/>
</dbReference>
<dbReference type="GO" id="GO:0000932">
    <property type="term" value="C:P-body"/>
    <property type="evidence" value="ECO:0000250"/>
    <property type="project" value="UniProtKB"/>
</dbReference>
<dbReference type="GO" id="GO:0000184">
    <property type="term" value="P:nuclear-transcribed mRNA catabolic process, nonsense-mediated decay"/>
    <property type="evidence" value="ECO:0000250"/>
    <property type="project" value="UniProtKB"/>
</dbReference>
<dbReference type="InterPro" id="IPR028322">
    <property type="entry name" value="PNRC-like_rgn"/>
</dbReference>
<dbReference type="InterPro" id="IPR026780">
    <property type="entry name" value="PNRC1/2"/>
</dbReference>
<dbReference type="PANTHER" id="PTHR15405">
    <property type="entry name" value="PROLINE-RICH NUCLEAR RECEPTOR COACTIVATOR"/>
    <property type="match status" value="1"/>
</dbReference>
<dbReference type="Pfam" id="PF15365">
    <property type="entry name" value="PNRC"/>
    <property type="match status" value="1"/>
</dbReference>
<sequence length="156" mass="16868">MGGGERYNIPVSHPERPLPKKNHQLGRAKQRVVRDQNGVTTVASSGAAGGPHQHGHRKGAAYPWFPEARLAASAEKKNTSVRFANAYDQNWEGAVSHLNTLLAAQCGGPSYAGAKFSEPPSPSVLPKPPSHWVPMGTRDSREMMAFQLKSLLKVHA</sequence>
<evidence type="ECO:0000250" key="1"/>
<evidence type="ECO:0000256" key="2">
    <source>
        <dbReference type="SAM" id="MobiDB-lite"/>
    </source>
</evidence>
<evidence type="ECO:0000305" key="3"/>
<protein>
    <recommendedName>
        <fullName>Proline-rich nuclear receptor coactivator 2</fullName>
    </recommendedName>
</protein>
<name>PNRC2_SALSA</name>
<feature type="chain" id="PRO_0000377565" description="Proline-rich nuclear receptor coactivator 2">
    <location>
        <begin position="1"/>
        <end position="156"/>
    </location>
</feature>
<feature type="region of interest" description="Disordered" evidence="2">
    <location>
        <begin position="1"/>
        <end position="32"/>
    </location>
</feature>
<feature type="short sequence motif" description="SH3-binding">
    <location>
        <begin position="117"/>
        <end position="123"/>
    </location>
</feature>
<feature type="compositionally biased region" description="Basic residues" evidence="2">
    <location>
        <begin position="19"/>
        <end position="31"/>
    </location>
</feature>
<comment type="function">
    <text evidence="1">Involved in nonsense-mediated mRNA decay (NMD) by acting as a bridge between the mRNA decapping complex and the NMD machinery. May act by targeting the NMD machinery to the P-body and recruiting the decapping machinery to aberrant mRNAs. Required for upf1/rent1 localization to the P-body. Also acts as a nuclear receptor coactivator (By similarity).</text>
</comment>
<comment type="subcellular location">
    <subcellularLocation>
        <location evidence="1">Nucleus</location>
    </subcellularLocation>
    <subcellularLocation>
        <location evidence="1">Cytoplasm</location>
        <location evidence="1">P-body</location>
    </subcellularLocation>
</comment>
<comment type="similarity">
    <text evidence="3">Belongs to the PNRC family. PNRC2 subfamily.</text>
</comment>
<accession>B5X392</accession>
<proteinExistence type="evidence at transcript level"/>
<reference key="1">
    <citation type="journal article" date="2010" name="BMC Genomics">
        <title>Salmo salar and Esox lucius full-length cDNA sequences reveal changes in evolutionary pressures on a post-tetraploidization genome.</title>
        <authorList>
            <person name="Leong J.S."/>
            <person name="Jantzen S.G."/>
            <person name="von Schalburg K.R."/>
            <person name="Cooper G.A."/>
            <person name="Messmer A.M."/>
            <person name="Liao N.Y."/>
            <person name="Munro S."/>
            <person name="Moore R."/>
            <person name="Holt R.A."/>
            <person name="Jones S.J."/>
            <person name="Davidson W.S."/>
            <person name="Koop B.F."/>
        </authorList>
    </citation>
    <scope>NUCLEOTIDE SEQUENCE [LARGE SCALE MRNA]</scope>
    <source>
        <tissue>Brain</tissue>
    </source>
</reference>
<keyword id="KW-0010">Activator</keyword>
<keyword id="KW-0963">Cytoplasm</keyword>
<keyword id="KW-0866">Nonsense-mediated mRNA decay</keyword>
<keyword id="KW-0539">Nucleus</keyword>
<keyword id="KW-1185">Reference proteome</keyword>
<keyword id="KW-0804">Transcription</keyword>
<keyword id="KW-0805">Transcription regulation</keyword>